<gene>
    <name type="primary">nup35</name>
    <name type="synonym">nup53</name>
    <name type="ORF">zgc:65979</name>
</gene>
<comment type="function">
    <text evidence="1">Functions as a component of the nuclear pore complex (NPC). NPC components, collectively referred to as nucleoporins (NUPs), can play the role of both NPC structural components and of docking or interaction partners for transiently associated nuclear transport factors (By similarity).</text>
</comment>
<comment type="subcellular location">
    <subcellularLocation>
        <location evidence="2">Nucleus</location>
        <location evidence="2">Nuclear pore complex</location>
    </subcellularLocation>
</comment>
<comment type="similarity">
    <text evidence="6">Belongs to the Nup35 family.</text>
</comment>
<evidence type="ECO:0000250" key="1"/>
<evidence type="ECO:0000250" key="2">
    <source>
        <dbReference type="UniProtKB" id="Q8NFH5"/>
    </source>
</evidence>
<evidence type="ECO:0000255" key="3">
    <source>
        <dbReference type="PROSITE-ProRule" id="PRU00804"/>
    </source>
</evidence>
<evidence type="ECO:0000256" key="4">
    <source>
        <dbReference type="SAM" id="MobiDB-lite"/>
    </source>
</evidence>
<evidence type="ECO:0000269" key="5">
    <source>
    </source>
</evidence>
<evidence type="ECO:0000305" key="6"/>
<organism>
    <name type="scientific">Danio rerio</name>
    <name type="common">Zebrafish</name>
    <name type="synonym">Brachydanio rerio</name>
    <dbReference type="NCBI Taxonomy" id="7955"/>
    <lineage>
        <taxon>Eukaryota</taxon>
        <taxon>Metazoa</taxon>
        <taxon>Chordata</taxon>
        <taxon>Craniata</taxon>
        <taxon>Vertebrata</taxon>
        <taxon>Euteleostomi</taxon>
        <taxon>Actinopterygii</taxon>
        <taxon>Neopterygii</taxon>
        <taxon>Teleostei</taxon>
        <taxon>Ostariophysi</taxon>
        <taxon>Cypriniformes</taxon>
        <taxon>Danionidae</taxon>
        <taxon>Danioninae</taxon>
        <taxon>Danio</taxon>
    </lineage>
</organism>
<accession>Q6P6X9</accession>
<sequence>MEIQSCIEPMTLGSPTSPKPGAQFLPGFLMGDLPAPVTPQPRSFGLTGGAEIRSPLLAGGSPPQPVVPTPKDKSGAPPVRSIYDDLNGSAVGMSPLAARKQPFAGVHTPLSGLQGTPGTVSNFFSPVSQQRKTTLSPAQVDPFFTQGDALSSEDQLDDTWITVFGFPPASASYILLQFAQYGNILKHVMSNTGNWMHVQYQSKLQARKALSKDGKIFGEAIMIGVKPCIDKSVMESLDKGSTSSSVFTPPVKAPCTPSHPLSTPRSVMRPLSAAYKASSSDYQVVSDQQTPKKDESFVSKAMEYMFGW</sequence>
<protein>
    <recommendedName>
        <fullName evidence="2">Nucleoporin NUP35</fullName>
    </recommendedName>
    <alternativeName>
        <fullName>35 kDa nucleoporin</fullName>
    </alternativeName>
    <alternativeName>
        <fullName>Nuclear pore complex protein Nup53</fullName>
    </alternativeName>
    <alternativeName>
        <fullName evidence="2">Nucleoporin NUP53</fullName>
    </alternativeName>
</protein>
<name>NUP35_DANRE</name>
<dbReference type="EMBL" id="BC061958">
    <property type="protein sequence ID" value="AAH61958.1"/>
    <property type="molecule type" value="mRNA"/>
</dbReference>
<dbReference type="RefSeq" id="NP_956360.1">
    <property type="nucleotide sequence ID" value="NM_200066.1"/>
</dbReference>
<dbReference type="SMR" id="Q6P6X9"/>
<dbReference type="FunCoup" id="Q6P6X9">
    <property type="interactions" value="1008"/>
</dbReference>
<dbReference type="STRING" id="7955.ENSDARP00000033355"/>
<dbReference type="iPTMnet" id="Q6P6X9"/>
<dbReference type="PaxDb" id="7955-ENSDARP00000033355"/>
<dbReference type="Ensembl" id="ENSDART00000032344">
    <property type="protein sequence ID" value="ENSDARP00000033355"/>
    <property type="gene ID" value="ENSDARG00000012222"/>
</dbReference>
<dbReference type="GeneID" id="337461"/>
<dbReference type="KEGG" id="dre:337461"/>
<dbReference type="AGR" id="ZFIN:ZDB-GENE-030131-9407"/>
<dbReference type="CTD" id="129401"/>
<dbReference type="ZFIN" id="ZDB-GENE-030131-9407">
    <property type="gene designation" value="nup35"/>
</dbReference>
<dbReference type="eggNOG" id="KOG4285">
    <property type="taxonomic scope" value="Eukaryota"/>
</dbReference>
<dbReference type="HOGENOM" id="CLU_056189_0_0_1"/>
<dbReference type="InParanoid" id="Q6P6X9"/>
<dbReference type="OMA" id="DKENCNA"/>
<dbReference type="OrthoDB" id="3365060at2759"/>
<dbReference type="PhylomeDB" id="Q6P6X9"/>
<dbReference type="TreeFam" id="TF325369"/>
<dbReference type="PRO" id="PR:Q6P6X9"/>
<dbReference type="Proteomes" id="UP000000437">
    <property type="component" value="Chromosome 9"/>
</dbReference>
<dbReference type="Bgee" id="ENSDARG00000012222">
    <property type="expression patterns" value="Expressed in early embryo and 28 other cell types or tissues"/>
</dbReference>
<dbReference type="ExpressionAtlas" id="Q6P6X9">
    <property type="expression patterns" value="baseline and differential"/>
</dbReference>
<dbReference type="GO" id="GO:0031965">
    <property type="term" value="C:nuclear membrane"/>
    <property type="evidence" value="ECO:0007669"/>
    <property type="project" value="InterPro"/>
</dbReference>
<dbReference type="GO" id="GO:0044613">
    <property type="term" value="C:nuclear pore central transport channel"/>
    <property type="evidence" value="ECO:0000318"/>
    <property type="project" value="GO_Central"/>
</dbReference>
<dbReference type="GO" id="GO:0044615">
    <property type="term" value="C:nuclear pore nuclear basket"/>
    <property type="evidence" value="ECO:0000318"/>
    <property type="project" value="GO_Central"/>
</dbReference>
<dbReference type="GO" id="GO:0003676">
    <property type="term" value="F:nucleic acid binding"/>
    <property type="evidence" value="ECO:0007669"/>
    <property type="project" value="InterPro"/>
</dbReference>
<dbReference type="GO" id="GO:0005543">
    <property type="term" value="F:phospholipid binding"/>
    <property type="evidence" value="ECO:0000318"/>
    <property type="project" value="GO_Central"/>
</dbReference>
<dbReference type="GO" id="GO:0017056">
    <property type="term" value="F:structural constituent of nuclear pore"/>
    <property type="evidence" value="ECO:0000318"/>
    <property type="project" value="GO_Central"/>
</dbReference>
<dbReference type="GO" id="GO:0051028">
    <property type="term" value="P:mRNA transport"/>
    <property type="evidence" value="ECO:0007669"/>
    <property type="project" value="UniProtKB-KW"/>
</dbReference>
<dbReference type="GO" id="GO:0006607">
    <property type="term" value="P:NLS-bearing protein import into nucleus"/>
    <property type="evidence" value="ECO:0000318"/>
    <property type="project" value="GO_Central"/>
</dbReference>
<dbReference type="GO" id="GO:0006999">
    <property type="term" value="P:nuclear pore organization"/>
    <property type="evidence" value="ECO:0000318"/>
    <property type="project" value="GO_Central"/>
</dbReference>
<dbReference type="CDD" id="cd12722">
    <property type="entry name" value="RRM_Nup53"/>
    <property type="match status" value="1"/>
</dbReference>
<dbReference type="FunFam" id="3.30.70.330:FF:000095">
    <property type="entry name" value="Putative Nucleoporin NUP53"/>
    <property type="match status" value="1"/>
</dbReference>
<dbReference type="Gene3D" id="3.30.70.330">
    <property type="match status" value="1"/>
</dbReference>
<dbReference type="InterPro" id="IPR017389">
    <property type="entry name" value="Nucleoporin_NUP53"/>
</dbReference>
<dbReference type="InterPro" id="IPR012677">
    <property type="entry name" value="Nucleotide-bd_a/b_plait_sf"/>
</dbReference>
<dbReference type="InterPro" id="IPR035979">
    <property type="entry name" value="RBD_domain_sf"/>
</dbReference>
<dbReference type="InterPro" id="IPR007846">
    <property type="entry name" value="RRM_NUP35_dom"/>
</dbReference>
<dbReference type="PANTHER" id="PTHR21527">
    <property type="entry name" value="NUCLEOPORIN NUP35"/>
    <property type="match status" value="1"/>
</dbReference>
<dbReference type="PANTHER" id="PTHR21527:SF6">
    <property type="entry name" value="NUCLEOPORIN NUP35"/>
    <property type="match status" value="1"/>
</dbReference>
<dbReference type="Pfam" id="PF05172">
    <property type="entry name" value="RRM_Nup35"/>
    <property type="match status" value="1"/>
</dbReference>
<dbReference type="PIRSF" id="PIRSF038119">
    <property type="entry name" value="Nucleoporin_NUP53"/>
    <property type="match status" value="1"/>
</dbReference>
<dbReference type="SUPFAM" id="SSF54928">
    <property type="entry name" value="RNA-binding domain, RBD"/>
    <property type="match status" value="1"/>
</dbReference>
<dbReference type="PROSITE" id="PS51472">
    <property type="entry name" value="RRM_NUP35"/>
    <property type="match status" value="1"/>
</dbReference>
<proteinExistence type="evidence at protein level"/>
<keyword id="KW-0509">mRNA transport</keyword>
<keyword id="KW-0906">Nuclear pore complex</keyword>
<keyword id="KW-0539">Nucleus</keyword>
<keyword id="KW-0597">Phosphoprotein</keyword>
<keyword id="KW-0653">Protein transport</keyword>
<keyword id="KW-1185">Reference proteome</keyword>
<keyword id="KW-0811">Translocation</keyword>
<keyword id="KW-0813">Transport</keyword>
<feature type="chain" id="PRO_0000234297" description="Nucleoporin NUP35">
    <location>
        <begin position="1"/>
        <end position="308"/>
    </location>
</feature>
<feature type="domain" description="RRM Nup35-type" evidence="3">
    <location>
        <begin position="155"/>
        <end position="235"/>
    </location>
</feature>
<feature type="region of interest" description="Disordered" evidence="4">
    <location>
        <begin position="1"/>
        <end position="80"/>
    </location>
</feature>
<feature type="region of interest" description="Disordered" evidence="4">
    <location>
        <begin position="242"/>
        <end position="265"/>
    </location>
</feature>
<feature type="modified residue" description="Phosphoserine" evidence="5">
    <location>
        <position position="54"/>
    </location>
</feature>
<feature type="modified residue" description="Phosphoserine" evidence="5">
    <location>
        <position position="61"/>
    </location>
</feature>
<reference key="1">
    <citation type="submission" date="2003-11" db="EMBL/GenBank/DDBJ databases">
        <authorList>
            <consortium name="NIH - Zebrafish Gene Collection (ZGC) project"/>
        </authorList>
    </citation>
    <scope>NUCLEOTIDE SEQUENCE [LARGE SCALE MRNA]</scope>
    <source>
        <tissue>Kidney</tissue>
    </source>
</reference>
<reference key="2">
    <citation type="journal article" date="2008" name="J. Proteome Res.">
        <title>Online automated in vivo zebrafish phosphoproteomics: from large-scale analysis down to a single embryo.</title>
        <authorList>
            <person name="Lemeer S."/>
            <person name="Pinkse M.W.H."/>
            <person name="Mohammed S."/>
            <person name="van Breukelen B."/>
            <person name="den Hertog J."/>
            <person name="Slijper M."/>
            <person name="Heck A.J.R."/>
        </authorList>
    </citation>
    <scope>PHOSPHORYLATION [LARGE SCALE ANALYSIS] AT SER-54 AND SER-61</scope>
    <scope>IDENTIFICATION BY MASS SPECTROMETRY</scope>
    <source>
        <tissue>Embryo</tissue>
    </source>
</reference>